<gene>
    <name evidence="1" type="primary">hrcA</name>
    <name type="ordered locus">EF_1306</name>
</gene>
<sequence>MITERQQNILRLIIQNYTNTGLPVGSKKLMEDGIASSSATIRNDMKALEEYGLLAKTHSSSGRIPSMAGYRYYVDHLLQPTQVEENELRRIRQSFGKEFHEINDIIRQSAEILSELTSYTAFSLGPEVKERKLTGFRMVPLNDRQVLAIIVTDKGNVENQVFAIPAAVSSQDLEKMTQIINDKLVGQPLLTVYHRLRTEIPMILHRYFQTPEGMMNLFDEMLGHAFEEKVFVGGRMNLLDFGIKQDIEQLKSVYSFMQNSDELTHLLNGSATTENPIVFRIGSEIGNNLLEDMSMITATYEVSGHGKGTIALLGPTSMPYSKIFGLVDTFRHELASQLGDYYRFLGN</sequence>
<comment type="function">
    <text evidence="1">Negative regulator of class I heat shock genes (grpE-dnaK-dnaJ and groELS operons). Prevents heat-shock induction of these operons.</text>
</comment>
<comment type="similarity">
    <text evidence="1">Belongs to the HrcA family.</text>
</comment>
<dbReference type="EMBL" id="AE016830">
    <property type="protein sequence ID" value="AAO81098.1"/>
    <property type="molecule type" value="Genomic_DNA"/>
</dbReference>
<dbReference type="RefSeq" id="NP_815028.1">
    <property type="nucleotide sequence ID" value="NC_004668.1"/>
</dbReference>
<dbReference type="RefSeq" id="WP_002357828.1">
    <property type="nucleotide sequence ID" value="NZ_KE136528.1"/>
</dbReference>
<dbReference type="SMR" id="Q835R9"/>
<dbReference type="STRING" id="226185.EF_1306"/>
<dbReference type="EnsemblBacteria" id="AAO81098">
    <property type="protein sequence ID" value="AAO81098"/>
    <property type="gene ID" value="EF_1306"/>
</dbReference>
<dbReference type="GeneID" id="60893689"/>
<dbReference type="KEGG" id="efa:EF1306"/>
<dbReference type="PATRIC" id="fig|226185.45.peg.2195"/>
<dbReference type="eggNOG" id="COG1420">
    <property type="taxonomic scope" value="Bacteria"/>
</dbReference>
<dbReference type="HOGENOM" id="CLU_050019_1_0_9"/>
<dbReference type="Proteomes" id="UP000001415">
    <property type="component" value="Chromosome"/>
</dbReference>
<dbReference type="GO" id="GO:0003677">
    <property type="term" value="F:DNA binding"/>
    <property type="evidence" value="ECO:0007669"/>
    <property type="project" value="InterPro"/>
</dbReference>
<dbReference type="GO" id="GO:0045892">
    <property type="term" value="P:negative regulation of DNA-templated transcription"/>
    <property type="evidence" value="ECO:0007669"/>
    <property type="project" value="UniProtKB-UniRule"/>
</dbReference>
<dbReference type="Gene3D" id="3.30.450.40">
    <property type="match status" value="1"/>
</dbReference>
<dbReference type="Gene3D" id="3.30.390.60">
    <property type="entry name" value="Heat-inducible transcription repressor hrca homolog, domain 3"/>
    <property type="match status" value="1"/>
</dbReference>
<dbReference type="Gene3D" id="1.10.10.10">
    <property type="entry name" value="Winged helix-like DNA-binding domain superfamily/Winged helix DNA-binding domain"/>
    <property type="match status" value="1"/>
</dbReference>
<dbReference type="HAMAP" id="MF_00081">
    <property type="entry name" value="HrcA"/>
    <property type="match status" value="1"/>
</dbReference>
<dbReference type="InterPro" id="IPR029016">
    <property type="entry name" value="GAF-like_dom_sf"/>
</dbReference>
<dbReference type="InterPro" id="IPR002571">
    <property type="entry name" value="HrcA"/>
</dbReference>
<dbReference type="InterPro" id="IPR021153">
    <property type="entry name" value="HrcA_C"/>
</dbReference>
<dbReference type="InterPro" id="IPR036388">
    <property type="entry name" value="WH-like_DNA-bd_sf"/>
</dbReference>
<dbReference type="InterPro" id="IPR036390">
    <property type="entry name" value="WH_DNA-bd_sf"/>
</dbReference>
<dbReference type="InterPro" id="IPR023120">
    <property type="entry name" value="WHTH_transcript_rep_HrcA_IDD"/>
</dbReference>
<dbReference type="NCBIfam" id="TIGR00331">
    <property type="entry name" value="hrcA"/>
    <property type="match status" value="1"/>
</dbReference>
<dbReference type="PANTHER" id="PTHR34824">
    <property type="entry name" value="HEAT-INDUCIBLE TRANSCRIPTION REPRESSOR HRCA"/>
    <property type="match status" value="1"/>
</dbReference>
<dbReference type="PANTHER" id="PTHR34824:SF1">
    <property type="entry name" value="HEAT-INDUCIBLE TRANSCRIPTION REPRESSOR HRCA"/>
    <property type="match status" value="1"/>
</dbReference>
<dbReference type="Pfam" id="PF01628">
    <property type="entry name" value="HrcA"/>
    <property type="match status" value="1"/>
</dbReference>
<dbReference type="PIRSF" id="PIRSF005485">
    <property type="entry name" value="HrcA"/>
    <property type="match status" value="1"/>
</dbReference>
<dbReference type="SUPFAM" id="SSF55781">
    <property type="entry name" value="GAF domain-like"/>
    <property type="match status" value="1"/>
</dbReference>
<dbReference type="SUPFAM" id="SSF46785">
    <property type="entry name" value="Winged helix' DNA-binding domain"/>
    <property type="match status" value="1"/>
</dbReference>
<evidence type="ECO:0000255" key="1">
    <source>
        <dbReference type="HAMAP-Rule" id="MF_00081"/>
    </source>
</evidence>
<feature type="chain" id="PRO_0000182478" description="Heat-inducible transcription repressor HrcA">
    <location>
        <begin position="1"/>
        <end position="347"/>
    </location>
</feature>
<proteinExistence type="inferred from homology"/>
<keyword id="KW-1185">Reference proteome</keyword>
<keyword id="KW-0678">Repressor</keyword>
<keyword id="KW-0346">Stress response</keyword>
<keyword id="KW-0804">Transcription</keyword>
<keyword id="KW-0805">Transcription regulation</keyword>
<name>HRCA_ENTFA</name>
<reference key="1">
    <citation type="journal article" date="2003" name="Science">
        <title>Role of mobile DNA in the evolution of vancomycin-resistant Enterococcus faecalis.</title>
        <authorList>
            <person name="Paulsen I.T."/>
            <person name="Banerjei L."/>
            <person name="Myers G.S.A."/>
            <person name="Nelson K.E."/>
            <person name="Seshadri R."/>
            <person name="Read T.D."/>
            <person name="Fouts D.E."/>
            <person name="Eisen J.A."/>
            <person name="Gill S.R."/>
            <person name="Heidelberg J.F."/>
            <person name="Tettelin H."/>
            <person name="Dodson R.J."/>
            <person name="Umayam L.A."/>
            <person name="Brinkac L.M."/>
            <person name="Beanan M.J."/>
            <person name="Daugherty S.C."/>
            <person name="DeBoy R.T."/>
            <person name="Durkin S.A."/>
            <person name="Kolonay J.F."/>
            <person name="Madupu R."/>
            <person name="Nelson W.C."/>
            <person name="Vamathevan J.J."/>
            <person name="Tran B."/>
            <person name="Upton J."/>
            <person name="Hansen T."/>
            <person name="Shetty J."/>
            <person name="Khouri H.M."/>
            <person name="Utterback T.R."/>
            <person name="Radune D."/>
            <person name="Ketchum K.A."/>
            <person name="Dougherty B.A."/>
            <person name="Fraser C.M."/>
        </authorList>
    </citation>
    <scope>NUCLEOTIDE SEQUENCE [LARGE SCALE GENOMIC DNA]</scope>
    <source>
        <strain>ATCC 700802 / V583</strain>
    </source>
</reference>
<protein>
    <recommendedName>
        <fullName evidence="1">Heat-inducible transcription repressor HrcA</fullName>
    </recommendedName>
</protein>
<accession>Q835R9</accession>
<organism>
    <name type="scientific">Enterococcus faecalis (strain ATCC 700802 / V583)</name>
    <dbReference type="NCBI Taxonomy" id="226185"/>
    <lineage>
        <taxon>Bacteria</taxon>
        <taxon>Bacillati</taxon>
        <taxon>Bacillota</taxon>
        <taxon>Bacilli</taxon>
        <taxon>Lactobacillales</taxon>
        <taxon>Enterococcaceae</taxon>
        <taxon>Enterococcus</taxon>
    </lineage>
</organism>